<accession>P0A4G6</accession>
<accession>P55021</accession>
<accession>P95725</accession>
<accession>Q54396</accession>
<sequence>MSVLSKLMRAGEGKILRKLHRIADQVNSIEEDFADLSDAELRALTDEYKQRYADGESLDDLLPEAFATVREAAKRVLGQRHYDVQIMGGAALHMGYVAEMKTGEGKTLVGTLPAYLNALSGEGVHIVTVNDYLAERDSELMGRVHKFLGLNVGCILANQTPAQRREMYACDITYGTNNEFGFDYLRDNMAWSKDELVQRGHNFAIVDEVDSILVDEARTPLIISGPADQATKWYGDFAKLVTRLKKGEAGNTLKGIEETGDYEVDEKKRTVAIHESGVAKVEDWLGIDNLYESVNTPLVGYLNNAIKAKELFKKDKDYVVLDGEVMIVDEHTGRILAGRRYNEGMHQAIEAKEGVDIKDENQTLATITLQNFFRLYKRHDHDGKEQPGLSGMTGTAMTEAAEFHQIYKLGVVPIPTNRPMVRKDQSDLIYRTEVAKFEAVVDDIEEKHRKGQPILVGTTSVEKSEYLSQQLSKRGVQHEVLNAKQHDREATIVAQAGRKGSVTVATNMAGRGTDIKLGGNPEDLAEAELRQRGLDPEEHIEEWAAALPAALERAEQAVKAEFEEVKELGGLYVLGTERHESRRIDNQLRGRSGRQGDPGESRFYLSLGDDLMRLFKAQMVERVMSMANVPDDVPIENKMVTRAIASAQSQVETQNFETRKNVLKYDEVLNRQREVIYGERRRVLEGEDLQEQIQHFTNDTIDAYVQAETAEGFPEDWDLDRLWGAFKQLYPVKVTVEELEEAAGDRAGLTADYIAESIKDDVREQYEAREKQLGSEIMRELERRVVLSVLDRKWREHLYEMDYLQEGIGLRAMAQKDPLVEYQREGFDMFQAMMDGIKEESVGYLFNLEVQVEQQVEEVPVEDAAPSLDKGAQDAVPAQAGARPEIRAKGLDAPQRRDLHFSAPTVDGEGGVVEGEFTDGEPAQAQSDGLTRAERRKQAKGGRRRKK</sequence>
<feature type="chain" id="PRO_0000109615" description="Protein translocase subunit SecA">
    <location>
        <begin position="1"/>
        <end position="947"/>
    </location>
</feature>
<feature type="region of interest" description="Disordered" evidence="2">
    <location>
        <begin position="864"/>
        <end position="947"/>
    </location>
</feature>
<feature type="compositionally biased region" description="Basic and acidic residues" evidence="2">
    <location>
        <begin position="884"/>
        <end position="900"/>
    </location>
</feature>
<feature type="compositionally biased region" description="Basic residues" evidence="2">
    <location>
        <begin position="934"/>
        <end position="947"/>
    </location>
</feature>
<feature type="binding site" evidence="1">
    <location>
        <position position="85"/>
    </location>
    <ligand>
        <name>ATP</name>
        <dbReference type="ChEBI" id="CHEBI:30616"/>
    </ligand>
</feature>
<feature type="binding site" evidence="1">
    <location>
        <begin position="103"/>
        <end position="107"/>
    </location>
    <ligand>
        <name>ATP</name>
        <dbReference type="ChEBI" id="CHEBI:30616"/>
    </ligand>
</feature>
<feature type="binding site" evidence="1">
    <location>
        <position position="514"/>
    </location>
    <ligand>
        <name>ATP</name>
        <dbReference type="ChEBI" id="CHEBI:30616"/>
    </ligand>
</feature>
<name>SECA_STRCO</name>
<evidence type="ECO:0000255" key="1">
    <source>
        <dbReference type="HAMAP-Rule" id="MF_01382"/>
    </source>
</evidence>
<evidence type="ECO:0000256" key="2">
    <source>
        <dbReference type="SAM" id="MobiDB-lite"/>
    </source>
</evidence>
<keyword id="KW-0067">ATP-binding</keyword>
<keyword id="KW-1003">Cell membrane</keyword>
<keyword id="KW-0963">Cytoplasm</keyword>
<keyword id="KW-0472">Membrane</keyword>
<keyword id="KW-0547">Nucleotide-binding</keyword>
<keyword id="KW-0653">Protein transport</keyword>
<keyword id="KW-1185">Reference proteome</keyword>
<keyword id="KW-1278">Translocase</keyword>
<keyword id="KW-0811">Translocation</keyword>
<keyword id="KW-0813">Transport</keyword>
<comment type="function">
    <text evidence="1">Part of the Sec protein translocase complex. Interacts with the SecYEG preprotein conducting channel. Has a central role in coupling the hydrolysis of ATP to the transfer of proteins into and across the cell membrane, serving as an ATP-driven molecular motor driving the stepwise translocation of polypeptide chains across the membrane.</text>
</comment>
<comment type="catalytic activity">
    <reaction evidence="1">
        <text>ATP + H2O + cellular proteinSide 1 = ADP + phosphate + cellular proteinSide 2.</text>
        <dbReference type="EC" id="7.4.2.8"/>
    </reaction>
</comment>
<comment type="subunit">
    <text evidence="1">Monomer and homodimer. Part of the essential Sec protein translocation apparatus which comprises SecA, SecYEG and auxiliary proteins SecDF. Other proteins may also be involved.</text>
</comment>
<comment type="subcellular location">
    <subcellularLocation>
        <location evidence="1">Cell membrane</location>
        <topology evidence="1">Peripheral membrane protein</topology>
        <orientation evidence="1">Cytoplasmic side</orientation>
    </subcellularLocation>
    <subcellularLocation>
        <location evidence="1">Cytoplasm</location>
    </subcellularLocation>
    <text evidence="1">Distribution is 50-50.</text>
</comment>
<comment type="similarity">
    <text evidence="1">Belongs to the SecA family.</text>
</comment>
<gene>
    <name evidence="1" type="primary">secA</name>
    <name type="ordered locus">SCO3005</name>
    <name type="ORF">SCE33.07c</name>
</gene>
<protein>
    <recommendedName>
        <fullName evidence="1">Protein translocase subunit SecA</fullName>
        <ecNumber evidence="1">7.4.2.8</ecNumber>
    </recommendedName>
</protein>
<reference key="1">
    <citation type="submission" date="1997-01" db="EMBL/GenBank/DDBJ databases">
        <authorList>
            <person name="Brans A."/>
        </authorList>
    </citation>
    <scope>NUCLEOTIDE SEQUENCE [GENOMIC DNA]</scope>
    <source>
        <strain>A3(2) / NRRL B-16638</strain>
    </source>
</reference>
<reference key="2">
    <citation type="journal article" date="2002" name="Nature">
        <title>Complete genome sequence of the model actinomycete Streptomyces coelicolor A3(2).</title>
        <authorList>
            <person name="Bentley S.D."/>
            <person name="Chater K.F."/>
            <person name="Cerdeno-Tarraga A.-M."/>
            <person name="Challis G.L."/>
            <person name="Thomson N.R."/>
            <person name="James K.D."/>
            <person name="Harris D.E."/>
            <person name="Quail M.A."/>
            <person name="Kieser H."/>
            <person name="Harper D."/>
            <person name="Bateman A."/>
            <person name="Brown S."/>
            <person name="Chandra G."/>
            <person name="Chen C.W."/>
            <person name="Collins M."/>
            <person name="Cronin A."/>
            <person name="Fraser A."/>
            <person name="Goble A."/>
            <person name="Hidalgo J."/>
            <person name="Hornsby T."/>
            <person name="Howarth S."/>
            <person name="Huang C.-H."/>
            <person name="Kieser T."/>
            <person name="Larke L."/>
            <person name="Murphy L.D."/>
            <person name="Oliver K."/>
            <person name="O'Neil S."/>
            <person name="Rabbinowitsch E."/>
            <person name="Rajandream M.A."/>
            <person name="Rutherford K.M."/>
            <person name="Rutter S."/>
            <person name="Seeger K."/>
            <person name="Saunders D."/>
            <person name="Sharp S."/>
            <person name="Squares R."/>
            <person name="Squares S."/>
            <person name="Taylor K."/>
            <person name="Warren T."/>
            <person name="Wietzorrek A."/>
            <person name="Woodward J.R."/>
            <person name="Barrell B.G."/>
            <person name="Parkhill J."/>
            <person name="Hopwood D.A."/>
        </authorList>
    </citation>
    <scope>NUCLEOTIDE SEQUENCE [LARGE SCALE GENOMIC DNA]</scope>
    <source>
        <strain>ATCC BAA-471 / A3(2) / M145</strain>
    </source>
</reference>
<proteinExistence type="inferred from homology"/>
<organism>
    <name type="scientific">Streptomyces coelicolor (strain ATCC BAA-471 / A3(2) / M145)</name>
    <dbReference type="NCBI Taxonomy" id="100226"/>
    <lineage>
        <taxon>Bacteria</taxon>
        <taxon>Bacillati</taxon>
        <taxon>Actinomycetota</taxon>
        <taxon>Actinomycetes</taxon>
        <taxon>Kitasatosporales</taxon>
        <taxon>Streptomycetaceae</taxon>
        <taxon>Streptomyces</taxon>
        <taxon>Streptomyces albidoflavus group</taxon>
    </lineage>
</organism>
<dbReference type="EC" id="7.4.2.8" evidence="1"/>
<dbReference type="EMBL" id="X79813">
    <property type="protein sequence ID" value="CAA56209.1"/>
    <property type="molecule type" value="Genomic_DNA"/>
</dbReference>
<dbReference type="EMBL" id="AL939114">
    <property type="protein sequence ID" value="CAB90916.1"/>
    <property type="molecule type" value="Genomic_DNA"/>
</dbReference>
<dbReference type="PIR" id="T42056">
    <property type="entry name" value="T42056"/>
</dbReference>
<dbReference type="RefSeq" id="NP_627227.1">
    <property type="nucleotide sequence ID" value="NC_003888.3"/>
</dbReference>
<dbReference type="RefSeq" id="WP_003975807.1">
    <property type="nucleotide sequence ID" value="NZ_VNID01000010.1"/>
</dbReference>
<dbReference type="SMR" id="P0A4G6"/>
<dbReference type="FunCoup" id="P0A4G6">
    <property type="interactions" value="292"/>
</dbReference>
<dbReference type="STRING" id="100226.gene:17760617"/>
<dbReference type="PaxDb" id="100226-SCO3005"/>
<dbReference type="GeneID" id="91385991"/>
<dbReference type="KEGG" id="sco:SCO3005"/>
<dbReference type="PATRIC" id="fig|100226.15.peg.3064"/>
<dbReference type="eggNOG" id="COG0653">
    <property type="taxonomic scope" value="Bacteria"/>
</dbReference>
<dbReference type="HOGENOM" id="CLU_005314_3_0_11"/>
<dbReference type="InParanoid" id="P0A4G6"/>
<dbReference type="OrthoDB" id="9805579at2"/>
<dbReference type="PhylomeDB" id="P0A4G6"/>
<dbReference type="Proteomes" id="UP000001973">
    <property type="component" value="Chromosome"/>
</dbReference>
<dbReference type="GO" id="GO:0031522">
    <property type="term" value="C:cell envelope Sec protein transport complex"/>
    <property type="evidence" value="ECO:0000318"/>
    <property type="project" value="GO_Central"/>
</dbReference>
<dbReference type="GO" id="GO:0005737">
    <property type="term" value="C:cytoplasm"/>
    <property type="evidence" value="ECO:0007669"/>
    <property type="project" value="UniProtKB-SubCell"/>
</dbReference>
<dbReference type="GO" id="GO:0005886">
    <property type="term" value="C:plasma membrane"/>
    <property type="evidence" value="ECO:0000318"/>
    <property type="project" value="GO_Central"/>
</dbReference>
<dbReference type="GO" id="GO:0005524">
    <property type="term" value="F:ATP binding"/>
    <property type="evidence" value="ECO:0000318"/>
    <property type="project" value="GO_Central"/>
</dbReference>
<dbReference type="GO" id="GO:0008564">
    <property type="term" value="F:protein-exporting ATPase activity"/>
    <property type="evidence" value="ECO:0007669"/>
    <property type="project" value="UniProtKB-EC"/>
</dbReference>
<dbReference type="GO" id="GO:0065002">
    <property type="term" value="P:intracellular protein transmembrane transport"/>
    <property type="evidence" value="ECO:0007669"/>
    <property type="project" value="UniProtKB-UniRule"/>
</dbReference>
<dbReference type="GO" id="GO:0017038">
    <property type="term" value="P:protein import"/>
    <property type="evidence" value="ECO:0007669"/>
    <property type="project" value="InterPro"/>
</dbReference>
<dbReference type="GO" id="GO:0006605">
    <property type="term" value="P:protein targeting"/>
    <property type="evidence" value="ECO:0007669"/>
    <property type="project" value="UniProtKB-UniRule"/>
</dbReference>
<dbReference type="GO" id="GO:0043952">
    <property type="term" value="P:protein transport by the Sec complex"/>
    <property type="evidence" value="ECO:0000318"/>
    <property type="project" value="GO_Central"/>
</dbReference>
<dbReference type="CDD" id="cd17928">
    <property type="entry name" value="DEXDc_SecA"/>
    <property type="match status" value="1"/>
</dbReference>
<dbReference type="CDD" id="cd18803">
    <property type="entry name" value="SF2_C_secA"/>
    <property type="match status" value="1"/>
</dbReference>
<dbReference type="FunFam" id="1.10.3060.10:FF:000002">
    <property type="entry name" value="Preprotein translocase subunit SecA"/>
    <property type="match status" value="1"/>
</dbReference>
<dbReference type="FunFam" id="3.40.50.300:FF:000113">
    <property type="entry name" value="Preprotein translocase subunit SecA"/>
    <property type="match status" value="1"/>
</dbReference>
<dbReference type="FunFam" id="3.40.50.300:FF:000334">
    <property type="entry name" value="Protein translocase subunit SecA"/>
    <property type="match status" value="1"/>
</dbReference>
<dbReference type="FunFam" id="3.90.1440.10:FF:000002">
    <property type="entry name" value="Protein translocase subunit SecA"/>
    <property type="match status" value="1"/>
</dbReference>
<dbReference type="Gene3D" id="1.10.3060.10">
    <property type="entry name" value="Helical scaffold and wing domains of SecA"/>
    <property type="match status" value="1"/>
</dbReference>
<dbReference type="Gene3D" id="3.40.50.300">
    <property type="entry name" value="P-loop containing nucleotide triphosphate hydrolases"/>
    <property type="match status" value="2"/>
</dbReference>
<dbReference type="Gene3D" id="3.90.1440.10">
    <property type="entry name" value="SecA, preprotein cross-linking domain"/>
    <property type="match status" value="1"/>
</dbReference>
<dbReference type="HAMAP" id="MF_01382">
    <property type="entry name" value="SecA"/>
    <property type="match status" value="1"/>
</dbReference>
<dbReference type="InterPro" id="IPR014001">
    <property type="entry name" value="Helicase_ATP-bd"/>
</dbReference>
<dbReference type="InterPro" id="IPR001650">
    <property type="entry name" value="Helicase_C-like"/>
</dbReference>
<dbReference type="InterPro" id="IPR027417">
    <property type="entry name" value="P-loop_NTPase"/>
</dbReference>
<dbReference type="InterPro" id="IPR000185">
    <property type="entry name" value="SecA"/>
</dbReference>
<dbReference type="InterPro" id="IPR020937">
    <property type="entry name" value="SecA_CS"/>
</dbReference>
<dbReference type="InterPro" id="IPR011115">
    <property type="entry name" value="SecA_DEAD"/>
</dbReference>
<dbReference type="InterPro" id="IPR014018">
    <property type="entry name" value="SecA_motor_DEAD"/>
</dbReference>
<dbReference type="InterPro" id="IPR011130">
    <property type="entry name" value="SecA_preprotein_X-link_dom"/>
</dbReference>
<dbReference type="InterPro" id="IPR044722">
    <property type="entry name" value="SecA_SF2_C"/>
</dbReference>
<dbReference type="InterPro" id="IPR011116">
    <property type="entry name" value="SecA_Wing/Scaffold"/>
</dbReference>
<dbReference type="InterPro" id="IPR036266">
    <property type="entry name" value="SecA_Wing/Scaffold_sf"/>
</dbReference>
<dbReference type="InterPro" id="IPR036670">
    <property type="entry name" value="SecA_X-link_sf"/>
</dbReference>
<dbReference type="NCBIfam" id="NF009538">
    <property type="entry name" value="PRK12904.1"/>
    <property type="match status" value="1"/>
</dbReference>
<dbReference type="NCBIfam" id="TIGR00963">
    <property type="entry name" value="secA"/>
    <property type="match status" value="1"/>
</dbReference>
<dbReference type="PANTHER" id="PTHR30612:SF0">
    <property type="entry name" value="CHLOROPLAST PROTEIN-TRANSPORTING ATPASE"/>
    <property type="match status" value="1"/>
</dbReference>
<dbReference type="PANTHER" id="PTHR30612">
    <property type="entry name" value="SECA INNER MEMBRANE COMPONENT OF SEC PROTEIN SECRETION SYSTEM"/>
    <property type="match status" value="1"/>
</dbReference>
<dbReference type="Pfam" id="PF21090">
    <property type="entry name" value="P-loop_SecA"/>
    <property type="match status" value="1"/>
</dbReference>
<dbReference type="Pfam" id="PF07517">
    <property type="entry name" value="SecA_DEAD"/>
    <property type="match status" value="1"/>
</dbReference>
<dbReference type="Pfam" id="PF01043">
    <property type="entry name" value="SecA_PP_bind"/>
    <property type="match status" value="1"/>
</dbReference>
<dbReference type="Pfam" id="PF07516">
    <property type="entry name" value="SecA_SW"/>
    <property type="match status" value="1"/>
</dbReference>
<dbReference type="PRINTS" id="PR00906">
    <property type="entry name" value="SECA"/>
</dbReference>
<dbReference type="SMART" id="SM00957">
    <property type="entry name" value="SecA_DEAD"/>
    <property type="match status" value="1"/>
</dbReference>
<dbReference type="SMART" id="SM00958">
    <property type="entry name" value="SecA_PP_bind"/>
    <property type="match status" value="1"/>
</dbReference>
<dbReference type="SUPFAM" id="SSF81886">
    <property type="entry name" value="Helical scaffold and wing domains of SecA"/>
    <property type="match status" value="1"/>
</dbReference>
<dbReference type="SUPFAM" id="SSF52540">
    <property type="entry name" value="P-loop containing nucleoside triphosphate hydrolases"/>
    <property type="match status" value="2"/>
</dbReference>
<dbReference type="SUPFAM" id="SSF81767">
    <property type="entry name" value="Pre-protein crosslinking domain of SecA"/>
    <property type="match status" value="1"/>
</dbReference>
<dbReference type="PROSITE" id="PS01312">
    <property type="entry name" value="SECA"/>
    <property type="match status" value="1"/>
</dbReference>
<dbReference type="PROSITE" id="PS51196">
    <property type="entry name" value="SECA_MOTOR_DEAD"/>
    <property type="match status" value="1"/>
</dbReference>